<organism>
    <name type="scientific">Bacillus anthracis (strain CDC 684 / NRRL 3495)</name>
    <dbReference type="NCBI Taxonomy" id="568206"/>
    <lineage>
        <taxon>Bacteria</taxon>
        <taxon>Bacillati</taxon>
        <taxon>Bacillota</taxon>
        <taxon>Bacilli</taxon>
        <taxon>Bacillales</taxon>
        <taxon>Bacillaceae</taxon>
        <taxon>Bacillus</taxon>
        <taxon>Bacillus cereus group</taxon>
    </lineage>
</organism>
<comment type="catalytic activity">
    <reaction evidence="1">
        <text>L-citrulline + L-aspartate + ATP = 2-(N(omega)-L-arginino)succinate + AMP + diphosphate + H(+)</text>
        <dbReference type="Rhea" id="RHEA:10932"/>
        <dbReference type="ChEBI" id="CHEBI:15378"/>
        <dbReference type="ChEBI" id="CHEBI:29991"/>
        <dbReference type="ChEBI" id="CHEBI:30616"/>
        <dbReference type="ChEBI" id="CHEBI:33019"/>
        <dbReference type="ChEBI" id="CHEBI:57472"/>
        <dbReference type="ChEBI" id="CHEBI:57743"/>
        <dbReference type="ChEBI" id="CHEBI:456215"/>
        <dbReference type="EC" id="6.3.4.5"/>
    </reaction>
</comment>
<comment type="pathway">
    <text evidence="1">Amino-acid biosynthesis; L-arginine biosynthesis; L-arginine from L-ornithine and carbamoyl phosphate: step 2/3.</text>
</comment>
<comment type="subunit">
    <text evidence="1">Homotetramer.</text>
</comment>
<comment type="subcellular location">
    <subcellularLocation>
        <location evidence="1">Cytoplasm</location>
    </subcellularLocation>
</comment>
<comment type="similarity">
    <text evidence="1">Belongs to the argininosuccinate synthase family. Type 1 subfamily.</text>
</comment>
<feature type="chain" id="PRO_1000191878" description="Argininosuccinate synthase">
    <location>
        <begin position="1"/>
        <end position="401"/>
    </location>
</feature>
<feature type="binding site" evidence="1">
    <location>
        <begin position="9"/>
        <end position="17"/>
    </location>
    <ligand>
        <name>ATP</name>
        <dbReference type="ChEBI" id="CHEBI:30616"/>
    </ligand>
</feature>
<feature type="binding site" evidence="1">
    <location>
        <position position="86"/>
    </location>
    <ligand>
        <name>L-citrulline</name>
        <dbReference type="ChEBI" id="CHEBI:57743"/>
    </ligand>
</feature>
<feature type="binding site" evidence="1">
    <location>
        <position position="116"/>
    </location>
    <ligand>
        <name>ATP</name>
        <dbReference type="ChEBI" id="CHEBI:30616"/>
    </ligand>
</feature>
<feature type="binding site" evidence="1">
    <location>
        <position position="118"/>
    </location>
    <ligand>
        <name>L-aspartate</name>
        <dbReference type="ChEBI" id="CHEBI:29991"/>
    </ligand>
</feature>
<feature type="binding site" evidence="1">
    <location>
        <position position="122"/>
    </location>
    <ligand>
        <name>L-aspartate</name>
        <dbReference type="ChEBI" id="CHEBI:29991"/>
    </ligand>
</feature>
<feature type="binding site" evidence="1">
    <location>
        <position position="122"/>
    </location>
    <ligand>
        <name>L-citrulline</name>
        <dbReference type="ChEBI" id="CHEBI:57743"/>
    </ligand>
</feature>
<feature type="binding site" evidence="1">
    <location>
        <position position="123"/>
    </location>
    <ligand>
        <name>L-aspartate</name>
        <dbReference type="ChEBI" id="CHEBI:29991"/>
    </ligand>
</feature>
<feature type="binding site" evidence="1">
    <location>
        <position position="126"/>
    </location>
    <ligand>
        <name>L-citrulline</name>
        <dbReference type="ChEBI" id="CHEBI:57743"/>
    </ligand>
</feature>
<feature type="binding site" evidence="1">
    <location>
        <position position="174"/>
    </location>
    <ligand>
        <name>L-citrulline</name>
        <dbReference type="ChEBI" id="CHEBI:57743"/>
    </ligand>
</feature>
<feature type="binding site" evidence="1">
    <location>
        <position position="183"/>
    </location>
    <ligand>
        <name>L-citrulline</name>
        <dbReference type="ChEBI" id="CHEBI:57743"/>
    </ligand>
</feature>
<feature type="binding site" evidence="1">
    <location>
        <position position="259"/>
    </location>
    <ligand>
        <name>L-citrulline</name>
        <dbReference type="ChEBI" id="CHEBI:57743"/>
    </ligand>
</feature>
<feature type="binding site" evidence="1">
    <location>
        <position position="271"/>
    </location>
    <ligand>
        <name>L-citrulline</name>
        <dbReference type="ChEBI" id="CHEBI:57743"/>
    </ligand>
</feature>
<name>ASSY_BACAC</name>
<keyword id="KW-0028">Amino-acid biosynthesis</keyword>
<keyword id="KW-0055">Arginine biosynthesis</keyword>
<keyword id="KW-0067">ATP-binding</keyword>
<keyword id="KW-0963">Cytoplasm</keyword>
<keyword id="KW-0436">Ligase</keyword>
<keyword id="KW-0547">Nucleotide-binding</keyword>
<sequence>MEKKKVVLAYSGGLDTSVAIKWLQEKNYDIIALCLDLGEGKDLAFVKEKALSVGAIKSYMIDVQEEFANEYALMAMQAHTLYEGKYPLVSALSRPLIAKKLVEIAEQEGATAVAHGCTGKGNDQVRFEVSIQALNPYLEVIAPVREWKWSREEEIAYAKENNVPIPINLDSPFSIDQNLWGRSNECGILEDPWAAPPEDAYEMTLALEDTPNKPEFVEIGFEAGVPTTLNGTAYPLSELIKTLNALAGKHGVGRIDHVENRLVGIKSREVYECPAAMTLITAHKELEDLTLVKEVAHFKPMIEQKITELIYNGLWFSPLKQALHAFLQETQKNVTGTVRVKLFKGHAIVEGRKSEYSLYDEKLATYTAQDEFNHDAAVGFISLFGLPTKVYSQVNQKKVEA</sequence>
<evidence type="ECO:0000255" key="1">
    <source>
        <dbReference type="HAMAP-Rule" id="MF_00005"/>
    </source>
</evidence>
<dbReference type="EC" id="6.3.4.5" evidence="1"/>
<dbReference type="EMBL" id="CP001215">
    <property type="protein sequence ID" value="ACP12345.1"/>
    <property type="molecule type" value="Genomic_DNA"/>
</dbReference>
<dbReference type="RefSeq" id="WP_000412328.1">
    <property type="nucleotide sequence ID" value="NC_012581.1"/>
</dbReference>
<dbReference type="SMR" id="C3L9T6"/>
<dbReference type="KEGG" id="bah:BAMEG_4912"/>
<dbReference type="HOGENOM" id="CLU_032784_4_2_9"/>
<dbReference type="UniPathway" id="UPA00068">
    <property type="reaction ID" value="UER00113"/>
</dbReference>
<dbReference type="GO" id="GO:0005737">
    <property type="term" value="C:cytoplasm"/>
    <property type="evidence" value="ECO:0007669"/>
    <property type="project" value="UniProtKB-SubCell"/>
</dbReference>
<dbReference type="GO" id="GO:0004055">
    <property type="term" value="F:argininosuccinate synthase activity"/>
    <property type="evidence" value="ECO:0007669"/>
    <property type="project" value="UniProtKB-UniRule"/>
</dbReference>
<dbReference type="GO" id="GO:0005524">
    <property type="term" value="F:ATP binding"/>
    <property type="evidence" value="ECO:0007669"/>
    <property type="project" value="UniProtKB-UniRule"/>
</dbReference>
<dbReference type="GO" id="GO:0000053">
    <property type="term" value="P:argininosuccinate metabolic process"/>
    <property type="evidence" value="ECO:0007669"/>
    <property type="project" value="TreeGrafter"/>
</dbReference>
<dbReference type="GO" id="GO:0006526">
    <property type="term" value="P:L-arginine biosynthetic process"/>
    <property type="evidence" value="ECO:0007669"/>
    <property type="project" value="UniProtKB-UniRule"/>
</dbReference>
<dbReference type="GO" id="GO:0000050">
    <property type="term" value="P:urea cycle"/>
    <property type="evidence" value="ECO:0007669"/>
    <property type="project" value="TreeGrafter"/>
</dbReference>
<dbReference type="CDD" id="cd01999">
    <property type="entry name" value="ASS"/>
    <property type="match status" value="1"/>
</dbReference>
<dbReference type="FunFam" id="1.20.5.470:FF:000002">
    <property type="entry name" value="Argininosuccinate synthase"/>
    <property type="match status" value="1"/>
</dbReference>
<dbReference type="FunFam" id="3.40.50.620:FF:000038">
    <property type="entry name" value="Argininosuccinate synthase"/>
    <property type="match status" value="1"/>
</dbReference>
<dbReference type="FunFam" id="3.90.1260.10:FF:000007">
    <property type="entry name" value="Argininosuccinate synthase"/>
    <property type="match status" value="1"/>
</dbReference>
<dbReference type="Gene3D" id="3.90.1260.10">
    <property type="entry name" value="Argininosuccinate synthetase, chain A, domain 2"/>
    <property type="match status" value="1"/>
</dbReference>
<dbReference type="Gene3D" id="3.40.50.620">
    <property type="entry name" value="HUPs"/>
    <property type="match status" value="1"/>
</dbReference>
<dbReference type="Gene3D" id="1.20.5.470">
    <property type="entry name" value="Single helix bin"/>
    <property type="match status" value="1"/>
</dbReference>
<dbReference type="HAMAP" id="MF_00005">
    <property type="entry name" value="Arg_succ_synth_type1"/>
    <property type="match status" value="1"/>
</dbReference>
<dbReference type="InterPro" id="IPR048268">
    <property type="entry name" value="Arginosuc_syn_C"/>
</dbReference>
<dbReference type="InterPro" id="IPR048267">
    <property type="entry name" value="Arginosuc_syn_N"/>
</dbReference>
<dbReference type="InterPro" id="IPR001518">
    <property type="entry name" value="Arginosuc_synth"/>
</dbReference>
<dbReference type="InterPro" id="IPR018223">
    <property type="entry name" value="Arginosuc_synth_CS"/>
</dbReference>
<dbReference type="InterPro" id="IPR023434">
    <property type="entry name" value="Arginosuc_synth_type_1_subfam"/>
</dbReference>
<dbReference type="InterPro" id="IPR024074">
    <property type="entry name" value="AS_cat/multimer_dom_body"/>
</dbReference>
<dbReference type="InterPro" id="IPR014729">
    <property type="entry name" value="Rossmann-like_a/b/a_fold"/>
</dbReference>
<dbReference type="NCBIfam" id="TIGR00032">
    <property type="entry name" value="argG"/>
    <property type="match status" value="1"/>
</dbReference>
<dbReference type="NCBIfam" id="NF001770">
    <property type="entry name" value="PRK00509.1"/>
    <property type="match status" value="1"/>
</dbReference>
<dbReference type="PANTHER" id="PTHR11587">
    <property type="entry name" value="ARGININOSUCCINATE SYNTHASE"/>
    <property type="match status" value="1"/>
</dbReference>
<dbReference type="PANTHER" id="PTHR11587:SF2">
    <property type="entry name" value="ARGININOSUCCINATE SYNTHASE"/>
    <property type="match status" value="1"/>
</dbReference>
<dbReference type="Pfam" id="PF20979">
    <property type="entry name" value="Arginosuc_syn_C"/>
    <property type="match status" value="1"/>
</dbReference>
<dbReference type="Pfam" id="PF00764">
    <property type="entry name" value="Arginosuc_synth"/>
    <property type="match status" value="1"/>
</dbReference>
<dbReference type="SUPFAM" id="SSF52402">
    <property type="entry name" value="Adenine nucleotide alpha hydrolases-like"/>
    <property type="match status" value="1"/>
</dbReference>
<dbReference type="SUPFAM" id="SSF69864">
    <property type="entry name" value="Argininosuccinate synthetase, C-terminal domain"/>
    <property type="match status" value="1"/>
</dbReference>
<dbReference type="PROSITE" id="PS00564">
    <property type="entry name" value="ARGININOSUCCIN_SYN_1"/>
    <property type="match status" value="1"/>
</dbReference>
<dbReference type="PROSITE" id="PS00565">
    <property type="entry name" value="ARGININOSUCCIN_SYN_2"/>
    <property type="match status" value="1"/>
</dbReference>
<proteinExistence type="inferred from homology"/>
<accession>C3L9T6</accession>
<gene>
    <name evidence="1" type="primary">argG</name>
    <name type="ordered locus">BAMEG_4912</name>
</gene>
<protein>
    <recommendedName>
        <fullName evidence="1">Argininosuccinate synthase</fullName>
        <ecNumber evidence="1">6.3.4.5</ecNumber>
    </recommendedName>
    <alternativeName>
        <fullName evidence="1">Citrulline--aspartate ligase</fullName>
    </alternativeName>
</protein>
<reference key="1">
    <citation type="submission" date="2008-10" db="EMBL/GenBank/DDBJ databases">
        <title>Genome sequence of Bacillus anthracis str. CDC 684.</title>
        <authorList>
            <person name="Dodson R.J."/>
            <person name="Munk A.C."/>
            <person name="Brettin T."/>
            <person name="Bruce D."/>
            <person name="Detter C."/>
            <person name="Tapia R."/>
            <person name="Han C."/>
            <person name="Sutton G."/>
            <person name="Sims D."/>
        </authorList>
    </citation>
    <scope>NUCLEOTIDE SEQUENCE [LARGE SCALE GENOMIC DNA]</scope>
    <source>
        <strain>CDC 684 / NRRL 3495</strain>
    </source>
</reference>